<proteinExistence type="inferred from homology"/>
<feature type="chain" id="PRO_1000119099" description="3-dehydroquinate synthase">
    <location>
        <begin position="1"/>
        <end position="362"/>
    </location>
</feature>
<feature type="binding site" evidence="1">
    <location>
        <begin position="71"/>
        <end position="76"/>
    </location>
    <ligand>
        <name>NAD(+)</name>
        <dbReference type="ChEBI" id="CHEBI:57540"/>
    </ligand>
</feature>
<feature type="binding site" evidence="1">
    <location>
        <begin position="105"/>
        <end position="109"/>
    </location>
    <ligand>
        <name>NAD(+)</name>
        <dbReference type="ChEBI" id="CHEBI:57540"/>
    </ligand>
</feature>
<feature type="binding site" evidence="1">
    <location>
        <begin position="129"/>
        <end position="130"/>
    </location>
    <ligand>
        <name>NAD(+)</name>
        <dbReference type="ChEBI" id="CHEBI:57540"/>
    </ligand>
</feature>
<feature type="binding site" evidence="1">
    <location>
        <position position="142"/>
    </location>
    <ligand>
        <name>NAD(+)</name>
        <dbReference type="ChEBI" id="CHEBI:57540"/>
    </ligand>
</feature>
<feature type="binding site" evidence="1">
    <location>
        <position position="151"/>
    </location>
    <ligand>
        <name>NAD(+)</name>
        <dbReference type="ChEBI" id="CHEBI:57540"/>
    </ligand>
</feature>
<feature type="binding site" evidence="1">
    <location>
        <begin position="169"/>
        <end position="172"/>
    </location>
    <ligand>
        <name>NAD(+)</name>
        <dbReference type="ChEBI" id="CHEBI:57540"/>
    </ligand>
</feature>
<feature type="binding site" evidence="1">
    <location>
        <position position="184"/>
    </location>
    <ligand>
        <name>Zn(2+)</name>
        <dbReference type="ChEBI" id="CHEBI:29105"/>
    </ligand>
</feature>
<feature type="binding site" evidence="1">
    <location>
        <position position="247"/>
    </location>
    <ligand>
        <name>Zn(2+)</name>
        <dbReference type="ChEBI" id="CHEBI:29105"/>
    </ligand>
</feature>
<feature type="binding site" evidence="1">
    <location>
        <position position="264"/>
    </location>
    <ligand>
        <name>Zn(2+)</name>
        <dbReference type="ChEBI" id="CHEBI:29105"/>
    </ligand>
</feature>
<name>AROB_VIBA3</name>
<comment type="function">
    <text evidence="1">Catalyzes the conversion of 3-deoxy-D-arabino-heptulosonate 7-phosphate (DAHP) to dehydroquinate (DHQ).</text>
</comment>
<comment type="catalytic activity">
    <reaction evidence="1">
        <text>7-phospho-2-dehydro-3-deoxy-D-arabino-heptonate = 3-dehydroquinate + phosphate</text>
        <dbReference type="Rhea" id="RHEA:21968"/>
        <dbReference type="ChEBI" id="CHEBI:32364"/>
        <dbReference type="ChEBI" id="CHEBI:43474"/>
        <dbReference type="ChEBI" id="CHEBI:58394"/>
        <dbReference type="EC" id="4.2.3.4"/>
    </reaction>
</comment>
<comment type="cofactor">
    <cofactor evidence="1">
        <name>Co(2+)</name>
        <dbReference type="ChEBI" id="CHEBI:48828"/>
    </cofactor>
    <cofactor evidence="1">
        <name>Zn(2+)</name>
        <dbReference type="ChEBI" id="CHEBI:29105"/>
    </cofactor>
    <text evidence="1">Binds 1 divalent metal cation per subunit. Can use either Co(2+) or Zn(2+).</text>
</comment>
<comment type="cofactor">
    <cofactor evidence="1">
        <name>NAD(+)</name>
        <dbReference type="ChEBI" id="CHEBI:57540"/>
    </cofactor>
</comment>
<comment type="pathway">
    <text evidence="1">Metabolic intermediate biosynthesis; chorismate biosynthesis; chorismate from D-erythrose 4-phosphate and phosphoenolpyruvate: step 2/7.</text>
</comment>
<comment type="subcellular location">
    <subcellularLocation>
        <location evidence="1">Cytoplasm</location>
    </subcellularLocation>
</comment>
<comment type="similarity">
    <text evidence="1">Belongs to the sugar phosphate cyclases superfamily. Dehydroquinate synthase family.</text>
</comment>
<protein>
    <recommendedName>
        <fullName evidence="1">3-dehydroquinate synthase</fullName>
        <shortName evidence="1">DHQS</shortName>
        <ecNumber evidence="1">4.2.3.4</ecNumber>
    </recommendedName>
</protein>
<sequence>MERITVNLAERSYPISIGAGLFEDPAYLSFLSGKQKVVVISNVTVAPLYADKILSLLDQVGCQTSLLELPDGEQYKNLETFNSVMSYMLEGNYSRDVVVIALGGGVIGDLVGFAASCYQRGIDFIQIPTTLLSQVDSSVGGKTAVNHPLGKNMIGAFYQPKSVIIDTNCLSTLPEREFAAGMAEVIKYGIIYDEAFFGWLEQNLEKLYQLDEDALITAIARCCAIKAEVVAIDEKESGIRALLNLGHTFGHAIEAELGYGNWLHGEAVSSGTVMAAKTAQLQGLISQQQLERIISILKNAKLPIHTPESMSFEDFMKHMMRDKKVLSGQLRLVLPTSIGTAEVVADVPQDIIKQAIDFCRTL</sequence>
<keyword id="KW-0028">Amino-acid biosynthesis</keyword>
<keyword id="KW-0057">Aromatic amino acid biosynthesis</keyword>
<keyword id="KW-0170">Cobalt</keyword>
<keyword id="KW-0963">Cytoplasm</keyword>
<keyword id="KW-0456">Lyase</keyword>
<keyword id="KW-0479">Metal-binding</keyword>
<keyword id="KW-0520">NAD</keyword>
<keyword id="KW-0547">Nucleotide-binding</keyword>
<keyword id="KW-0862">Zinc</keyword>
<dbReference type="EC" id="4.2.3.4" evidence="1"/>
<dbReference type="EMBL" id="FM954972">
    <property type="protein sequence ID" value="CAV20164.1"/>
    <property type="molecule type" value="Genomic_DNA"/>
</dbReference>
<dbReference type="SMR" id="B7VLJ6"/>
<dbReference type="STRING" id="575788.VS_2871"/>
<dbReference type="KEGG" id="vsp:VS_2871"/>
<dbReference type="PATRIC" id="fig|575788.5.peg.4081"/>
<dbReference type="eggNOG" id="COG0337">
    <property type="taxonomic scope" value="Bacteria"/>
</dbReference>
<dbReference type="HOGENOM" id="CLU_001201_0_2_6"/>
<dbReference type="UniPathway" id="UPA00053">
    <property type="reaction ID" value="UER00085"/>
</dbReference>
<dbReference type="Proteomes" id="UP000009100">
    <property type="component" value="Chromosome 1"/>
</dbReference>
<dbReference type="GO" id="GO:0005737">
    <property type="term" value="C:cytoplasm"/>
    <property type="evidence" value="ECO:0007669"/>
    <property type="project" value="UniProtKB-SubCell"/>
</dbReference>
<dbReference type="GO" id="GO:0003856">
    <property type="term" value="F:3-dehydroquinate synthase activity"/>
    <property type="evidence" value="ECO:0007669"/>
    <property type="project" value="UniProtKB-UniRule"/>
</dbReference>
<dbReference type="GO" id="GO:0046872">
    <property type="term" value="F:metal ion binding"/>
    <property type="evidence" value="ECO:0007669"/>
    <property type="project" value="UniProtKB-KW"/>
</dbReference>
<dbReference type="GO" id="GO:0000166">
    <property type="term" value="F:nucleotide binding"/>
    <property type="evidence" value="ECO:0007669"/>
    <property type="project" value="UniProtKB-KW"/>
</dbReference>
<dbReference type="GO" id="GO:0008652">
    <property type="term" value="P:amino acid biosynthetic process"/>
    <property type="evidence" value="ECO:0007669"/>
    <property type="project" value="UniProtKB-KW"/>
</dbReference>
<dbReference type="GO" id="GO:0009073">
    <property type="term" value="P:aromatic amino acid family biosynthetic process"/>
    <property type="evidence" value="ECO:0007669"/>
    <property type="project" value="UniProtKB-KW"/>
</dbReference>
<dbReference type="GO" id="GO:0009423">
    <property type="term" value="P:chorismate biosynthetic process"/>
    <property type="evidence" value="ECO:0007669"/>
    <property type="project" value="UniProtKB-UniRule"/>
</dbReference>
<dbReference type="CDD" id="cd08195">
    <property type="entry name" value="DHQS"/>
    <property type="match status" value="1"/>
</dbReference>
<dbReference type="FunFam" id="1.20.1090.10:FF:000002">
    <property type="entry name" value="3-dehydroquinate synthase"/>
    <property type="match status" value="1"/>
</dbReference>
<dbReference type="FunFam" id="3.40.50.1970:FF:000001">
    <property type="entry name" value="3-dehydroquinate synthase"/>
    <property type="match status" value="1"/>
</dbReference>
<dbReference type="Gene3D" id="3.40.50.1970">
    <property type="match status" value="1"/>
</dbReference>
<dbReference type="Gene3D" id="1.20.1090.10">
    <property type="entry name" value="Dehydroquinate synthase-like - alpha domain"/>
    <property type="match status" value="1"/>
</dbReference>
<dbReference type="HAMAP" id="MF_00110">
    <property type="entry name" value="DHQ_synthase"/>
    <property type="match status" value="1"/>
</dbReference>
<dbReference type="InterPro" id="IPR050071">
    <property type="entry name" value="Dehydroquinate_synthase"/>
</dbReference>
<dbReference type="InterPro" id="IPR016037">
    <property type="entry name" value="DHQ_synth_AroB"/>
</dbReference>
<dbReference type="InterPro" id="IPR030963">
    <property type="entry name" value="DHQ_synth_fam"/>
</dbReference>
<dbReference type="InterPro" id="IPR030960">
    <property type="entry name" value="DHQS/DOIS_N"/>
</dbReference>
<dbReference type="InterPro" id="IPR056179">
    <property type="entry name" value="DHQS_C"/>
</dbReference>
<dbReference type="NCBIfam" id="TIGR01357">
    <property type="entry name" value="aroB"/>
    <property type="match status" value="1"/>
</dbReference>
<dbReference type="PANTHER" id="PTHR43622">
    <property type="entry name" value="3-DEHYDROQUINATE SYNTHASE"/>
    <property type="match status" value="1"/>
</dbReference>
<dbReference type="PANTHER" id="PTHR43622:SF7">
    <property type="entry name" value="3-DEHYDROQUINATE SYNTHASE, CHLOROPLASTIC"/>
    <property type="match status" value="1"/>
</dbReference>
<dbReference type="Pfam" id="PF01761">
    <property type="entry name" value="DHQ_synthase"/>
    <property type="match status" value="1"/>
</dbReference>
<dbReference type="Pfam" id="PF24621">
    <property type="entry name" value="DHQS_C"/>
    <property type="match status" value="1"/>
</dbReference>
<dbReference type="PIRSF" id="PIRSF001455">
    <property type="entry name" value="DHQ_synth"/>
    <property type="match status" value="1"/>
</dbReference>
<dbReference type="SUPFAM" id="SSF56796">
    <property type="entry name" value="Dehydroquinate synthase-like"/>
    <property type="match status" value="1"/>
</dbReference>
<evidence type="ECO:0000255" key="1">
    <source>
        <dbReference type="HAMAP-Rule" id="MF_00110"/>
    </source>
</evidence>
<gene>
    <name evidence="1" type="primary">aroB</name>
    <name type="ordered locus">VS_2871</name>
</gene>
<reference key="1">
    <citation type="submission" date="2009-02" db="EMBL/GenBank/DDBJ databases">
        <title>Vibrio splendidus str. LGP32 complete genome.</title>
        <authorList>
            <person name="Mazel D."/>
            <person name="Le Roux F."/>
        </authorList>
    </citation>
    <scope>NUCLEOTIDE SEQUENCE [LARGE SCALE GENOMIC DNA]</scope>
    <source>
        <strain>LGP32</strain>
    </source>
</reference>
<organism>
    <name type="scientific">Vibrio atlanticus (strain LGP32)</name>
    <name type="common">Vibrio splendidus (strain Mel32)</name>
    <dbReference type="NCBI Taxonomy" id="575788"/>
    <lineage>
        <taxon>Bacteria</taxon>
        <taxon>Pseudomonadati</taxon>
        <taxon>Pseudomonadota</taxon>
        <taxon>Gammaproteobacteria</taxon>
        <taxon>Vibrionales</taxon>
        <taxon>Vibrionaceae</taxon>
        <taxon>Vibrio</taxon>
    </lineage>
</organism>
<accession>B7VLJ6</accession>